<organism>
    <name type="scientific">Shewanella sp. (strain MR-7)</name>
    <dbReference type="NCBI Taxonomy" id="60481"/>
    <lineage>
        <taxon>Bacteria</taxon>
        <taxon>Pseudomonadati</taxon>
        <taxon>Pseudomonadota</taxon>
        <taxon>Gammaproteobacteria</taxon>
        <taxon>Alteromonadales</taxon>
        <taxon>Shewanellaceae</taxon>
        <taxon>Shewanella</taxon>
    </lineage>
</organism>
<name>DNAA_SHESR</name>
<evidence type="ECO:0000255" key="1">
    <source>
        <dbReference type="HAMAP-Rule" id="MF_00377"/>
    </source>
</evidence>
<proteinExistence type="inferred from homology"/>
<sequence length="460" mass="52011">MAVSLWQQCIGRLQDELSAQQFSMWIRPLQAEMDGDTLVLYAPNRFVLDWVRDKYINIINQFFTEQMGNDAPKLRFDIGSRPSAKKPEPAPVAAVRVPNPQTKASVGTSFNTTEPVVNANHRSNINPTYQFDNFVEGKSNQLGKAAALQVAENPGGAYNPLFLYGGTGLGKTHLLHAVGNGIIKNNPNAKVVYMHSERFVQDMVKALQNNAIEEFKRYYRSVDALFIDDIQFFANKDRSQEEFFHTFNALLEGNHQIILTSDRYPKEIDGVEDRLKSRFGWGLTVAIEPPELETRVAILMRKAQESGINLPDEVAFFIAKRLRSNVRELEGALNRVIANANFTGRPITIDFVREALRDLLALQEKLVTIDNIQKTVAEYYKIKMADMLSKRRSRSVARPRQVAMALSKELTNQSLPEIGDAFGGRDHTTVLHACRKIAQLREESHDIKEDYANLIRTLSS</sequence>
<accession>Q0I0U8</accession>
<dbReference type="EMBL" id="CP000444">
    <property type="protein sequence ID" value="ABI41007.1"/>
    <property type="molecule type" value="Genomic_DNA"/>
</dbReference>
<dbReference type="SMR" id="Q0I0U8"/>
<dbReference type="KEGG" id="shm:Shewmr7_0001"/>
<dbReference type="HOGENOM" id="CLU_026910_0_1_6"/>
<dbReference type="GO" id="GO:0005737">
    <property type="term" value="C:cytoplasm"/>
    <property type="evidence" value="ECO:0007669"/>
    <property type="project" value="UniProtKB-SubCell"/>
</dbReference>
<dbReference type="GO" id="GO:0005886">
    <property type="term" value="C:plasma membrane"/>
    <property type="evidence" value="ECO:0007669"/>
    <property type="project" value="TreeGrafter"/>
</dbReference>
<dbReference type="GO" id="GO:0005524">
    <property type="term" value="F:ATP binding"/>
    <property type="evidence" value="ECO:0007669"/>
    <property type="project" value="UniProtKB-UniRule"/>
</dbReference>
<dbReference type="GO" id="GO:0016887">
    <property type="term" value="F:ATP hydrolysis activity"/>
    <property type="evidence" value="ECO:0007669"/>
    <property type="project" value="InterPro"/>
</dbReference>
<dbReference type="GO" id="GO:0003688">
    <property type="term" value="F:DNA replication origin binding"/>
    <property type="evidence" value="ECO:0007669"/>
    <property type="project" value="UniProtKB-UniRule"/>
</dbReference>
<dbReference type="GO" id="GO:0008289">
    <property type="term" value="F:lipid binding"/>
    <property type="evidence" value="ECO:0007669"/>
    <property type="project" value="UniProtKB-KW"/>
</dbReference>
<dbReference type="GO" id="GO:0006270">
    <property type="term" value="P:DNA replication initiation"/>
    <property type="evidence" value="ECO:0007669"/>
    <property type="project" value="UniProtKB-UniRule"/>
</dbReference>
<dbReference type="GO" id="GO:0006275">
    <property type="term" value="P:regulation of DNA replication"/>
    <property type="evidence" value="ECO:0007669"/>
    <property type="project" value="UniProtKB-UniRule"/>
</dbReference>
<dbReference type="CDD" id="cd00009">
    <property type="entry name" value="AAA"/>
    <property type="match status" value="1"/>
</dbReference>
<dbReference type="CDD" id="cd06571">
    <property type="entry name" value="Bac_DnaA_C"/>
    <property type="match status" value="1"/>
</dbReference>
<dbReference type="FunFam" id="1.10.1750.10:FF:000001">
    <property type="entry name" value="Chromosomal replication initiator protein DnaA"/>
    <property type="match status" value="1"/>
</dbReference>
<dbReference type="FunFam" id="1.10.8.60:FF:000003">
    <property type="entry name" value="Chromosomal replication initiator protein DnaA"/>
    <property type="match status" value="1"/>
</dbReference>
<dbReference type="FunFam" id="3.30.300.180:FF:000001">
    <property type="entry name" value="Chromosomal replication initiator protein DnaA"/>
    <property type="match status" value="1"/>
</dbReference>
<dbReference type="FunFam" id="3.40.50.300:FF:000103">
    <property type="entry name" value="Chromosomal replication initiator protein DnaA"/>
    <property type="match status" value="1"/>
</dbReference>
<dbReference type="Gene3D" id="1.10.1750.10">
    <property type="match status" value="1"/>
</dbReference>
<dbReference type="Gene3D" id="1.10.8.60">
    <property type="match status" value="1"/>
</dbReference>
<dbReference type="Gene3D" id="3.30.300.180">
    <property type="match status" value="1"/>
</dbReference>
<dbReference type="Gene3D" id="3.40.50.300">
    <property type="entry name" value="P-loop containing nucleotide triphosphate hydrolases"/>
    <property type="match status" value="1"/>
</dbReference>
<dbReference type="HAMAP" id="MF_00377">
    <property type="entry name" value="DnaA_bact"/>
    <property type="match status" value="1"/>
</dbReference>
<dbReference type="InterPro" id="IPR003593">
    <property type="entry name" value="AAA+_ATPase"/>
</dbReference>
<dbReference type="InterPro" id="IPR001957">
    <property type="entry name" value="Chromosome_initiator_DnaA"/>
</dbReference>
<dbReference type="InterPro" id="IPR020591">
    <property type="entry name" value="Chromosome_initiator_DnaA-like"/>
</dbReference>
<dbReference type="InterPro" id="IPR018312">
    <property type="entry name" value="Chromosome_initiator_DnaA_CS"/>
</dbReference>
<dbReference type="InterPro" id="IPR013159">
    <property type="entry name" value="DnaA_C"/>
</dbReference>
<dbReference type="InterPro" id="IPR013317">
    <property type="entry name" value="DnaA_dom"/>
</dbReference>
<dbReference type="InterPro" id="IPR024633">
    <property type="entry name" value="DnaA_N_dom"/>
</dbReference>
<dbReference type="InterPro" id="IPR038454">
    <property type="entry name" value="DnaA_N_sf"/>
</dbReference>
<dbReference type="InterPro" id="IPR055199">
    <property type="entry name" value="Hda_lid"/>
</dbReference>
<dbReference type="InterPro" id="IPR027417">
    <property type="entry name" value="P-loop_NTPase"/>
</dbReference>
<dbReference type="InterPro" id="IPR010921">
    <property type="entry name" value="Trp_repressor/repl_initiator"/>
</dbReference>
<dbReference type="NCBIfam" id="TIGR00362">
    <property type="entry name" value="DnaA"/>
    <property type="match status" value="1"/>
</dbReference>
<dbReference type="PANTHER" id="PTHR30050">
    <property type="entry name" value="CHROMOSOMAL REPLICATION INITIATOR PROTEIN DNAA"/>
    <property type="match status" value="1"/>
</dbReference>
<dbReference type="PANTHER" id="PTHR30050:SF2">
    <property type="entry name" value="CHROMOSOMAL REPLICATION INITIATOR PROTEIN DNAA"/>
    <property type="match status" value="1"/>
</dbReference>
<dbReference type="Pfam" id="PF00308">
    <property type="entry name" value="Bac_DnaA"/>
    <property type="match status" value="1"/>
</dbReference>
<dbReference type="Pfam" id="PF08299">
    <property type="entry name" value="Bac_DnaA_C"/>
    <property type="match status" value="1"/>
</dbReference>
<dbReference type="Pfam" id="PF11638">
    <property type="entry name" value="DnaA_N"/>
    <property type="match status" value="1"/>
</dbReference>
<dbReference type="Pfam" id="PF22688">
    <property type="entry name" value="Hda_lid"/>
    <property type="match status" value="1"/>
</dbReference>
<dbReference type="PRINTS" id="PR00051">
    <property type="entry name" value="DNAA"/>
</dbReference>
<dbReference type="SMART" id="SM00382">
    <property type="entry name" value="AAA"/>
    <property type="match status" value="1"/>
</dbReference>
<dbReference type="SMART" id="SM00760">
    <property type="entry name" value="Bac_DnaA_C"/>
    <property type="match status" value="1"/>
</dbReference>
<dbReference type="SUPFAM" id="SSF52540">
    <property type="entry name" value="P-loop containing nucleoside triphosphate hydrolases"/>
    <property type="match status" value="1"/>
</dbReference>
<dbReference type="SUPFAM" id="SSF48295">
    <property type="entry name" value="TrpR-like"/>
    <property type="match status" value="1"/>
</dbReference>
<dbReference type="PROSITE" id="PS01008">
    <property type="entry name" value="DNAA"/>
    <property type="match status" value="1"/>
</dbReference>
<gene>
    <name evidence="1" type="primary">dnaA</name>
    <name type="ordered locus">Shewmr7_0001</name>
</gene>
<protein>
    <recommendedName>
        <fullName evidence="1">Chromosomal replication initiator protein DnaA</fullName>
    </recommendedName>
</protein>
<comment type="function">
    <text evidence="1">Plays an essential role in the initiation and regulation of chromosomal replication. ATP-DnaA binds to the origin of replication (oriC) to initiate formation of the DNA replication initiation complex once per cell cycle. Binds the DnaA box (a 9 base pair repeat at the origin) and separates the double-stranded (ds)DNA. Forms a right-handed helical filament on oriC DNA; dsDNA binds to the exterior of the filament while single-stranded (ss)DNA is stabiized in the filament's interior. The ATP-DnaA-oriC complex binds and stabilizes one strand of the AT-rich DNA unwinding element (DUE), permitting loading of DNA polymerase. After initiation quickly degrades to an ADP-DnaA complex that is not apt for DNA replication. Binds acidic phospholipids.</text>
</comment>
<comment type="subunit">
    <text evidence="1">Oligomerizes as a right-handed, spiral filament on DNA at oriC.</text>
</comment>
<comment type="subcellular location">
    <subcellularLocation>
        <location evidence="1">Cytoplasm</location>
    </subcellularLocation>
</comment>
<comment type="domain">
    <text evidence="1">Domain I is involved in oligomerization and binding regulators, domain II is flexibile and of varying length in different bacteria, domain III forms the AAA+ region, while domain IV binds dsDNA.</text>
</comment>
<comment type="similarity">
    <text evidence="1">Belongs to the DnaA family.</text>
</comment>
<reference key="1">
    <citation type="submission" date="2006-08" db="EMBL/GenBank/DDBJ databases">
        <title>Complete sequence of chromosome 1 of Shewanella sp. MR-7.</title>
        <authorList>
            <person name="Copeland A."/>
            <person name="Lucas S."/>
            <person name="Lapidus A."/>
            <person name="Barry K."/>
            <person name="Detter J.C."/>
            <person name="Glavina del Rio T."/>
            <person name="Hammon N."/>
            <person name="Israni S."/>
            <person name="Dalin E."/>
            <person name="Tice H."/>
            <person name="Pitluck S."/>
            <person name="Kiss H."/>
            <person name="Brettin T."/>
            <person name="Bruce D."/>
            <person name="Han C."/>
            <person name="Tapia R."/>
            <person name="Gilna P."/>
            <person name="Schmutz J."/>
            <person name="Larimer F."/>
            <person name="Land M."/>
            <person name="Hauser L."/>
            <person name="Kyrpides N."/>
            <person name="Mikhailova N."/>
            <person name="Nealson K."/>
            <person name="Konstantinidis K."/>
            <person name="Klappenbach J."/>
            <person name="Tiedje J."/>
            <person name="Richardson P."/>
        </authorList>
    </citation>
    <scope>NUCLEOTIDE SEQUENCE [LARGE SCALE GENOMIC DNA]</scope>
    <source>
        <strain>MR-7</strain>
    </source>
</reference>
<keyword id="KW-0067">ATP-binding</keyword>
<keyword id="KW-0963">Cytoplasm</keyword>
<keyword id="KW-0235">DNA replication</keyword>
<keyword id="KW-0238">DNA-binding</keyword>
<keyword id="KW-0446">Lipid-binding</keyword>
<keyword id="KW-0547">Nucleotide-binding</keyword>
<feature type="chain" id="PRO_1000048724" description="Chromosomal replication initiator protein DnaA">
    <location>
        <begin position="1"/>
        <end position="460"/>
    </location>
</feature>
<feature type="region of interest" description="Domain I, interacts with DnaA modulators" evidence="1">
    <location>
        <begin position="1"/>
        <end position="84"/>
    </location>
</feature>
<feature type="region of interest" description="Domain II" evidence="1">
    <location>
        <begin position="84"/>
        <end position="123"/>
    </location>
</feature>
<feature type="region of interest" description="Domain III, AAA+ region" evidence="1">
    <location>
        <begin position="124"/>
        <end position="340"/>
    </location>
</feature>
<feature type="region of interest" description="Domain IV, binds dsDNA" evidence="1">
    <location>
        <begin position="341"/>
        <end position="460"/>
    </location>
</feature>
<feature type="binding site" evidence="1">
    <location>
        <position position="168"/>
    </location>
    <ligand>
        <name>ATP</name>
        <dbReference type="ChEBI" id="CHEBI:30616"/>
    </ligand>
</feature>
<feature type="binding site" evidence="1">
    <location>
        <position position="170"/>
    </location>
    <ligand>
        <name>ATP</name>
        <dbReference type="ChEBI" id="CHEBI:30616"/>
    </ligand>
</feature>
<feature type="binding site" evidence="1">
    <location>
        <position position="171"/>
    </location>
    <ligand>
        <name>ATP</name>
        <dbReference type="ChEBI" id="CHEBI:30616"/>
    </ligand>
</feature>
<feature type="binding site" evidence="1">
    <location>
        <position position="172"/>
    </location>
    <ligand>
        <name>ATP</name>
        <dbReference type="ChEBI" id="CHEBI:30616"/>
    </ligand>
</feature>